<reference key="1">
    <citation type="journal article" date="2005" name="Nucleic Acids Res.">
        <title>Genomic blueprint of Hahella chejuensis, a marine microbe producing an algicidal agent.</title>
        <authorList>
            <person name="Jeong H."/>
            <person name="Yim J.H."/>
            <person name="Lee C."/>
            <person name="Choi S.-H."/>
            <person name="Park Y.K."/>
            <person name="Yoon S.H."/>
            <person name="Hur C.-G."/>
            <person name="Kang H.-Y."/>
            <person name="Kim D."/>
            <person name="Lee H.H."/>
            <person name="Park K.H."/>
            <person name="Park S.-H."/>
            <person name="Park H.-S."/>
            <person name="Lee H.K."/>
            <person name="Oh T.K."/>
            <person name="Kim J.F."/>
        </authorList>
    </citation>
    <scope>NUCLEOTIDE SEQUENCE [LARGE SCALE GENOMIC DNA]</scope>
    <source>
        <strain>KCTC 2396</strain>
    </source>
</reference>
<gene>
    <name evidence="1" type="primary">rnt</name>
    <name type="ordered locus">HCH_04993</name>
</gene>
<sequence>MSESQNRPKSPLARRFRGFLPVVVDVETAGFNSKTDALLEVSAVIISMEDDGMLYPEPPVSFNVEPFAGANIEQAALEFTGIDPFNPLRDAKPEADALNELFRPIRKSVKSNGCNRAILVGHNATFDHSFLFAAAERGDVKRNPFHPFSTFDTATLAALAYGHTVLSRACQLAGIPFDNKEAHSAEYDAMKTAELFCSIVNRWKELGGWTTDQQDYAD</sequence>
<keyword id="KW-0269">Exonuclease</keyword>
<keyword id="KW-0378">Hydrolase</keyword>
<keyword id="KW-0460">Magnesium</keyword>
<keyword id="KW-0479">Metal-binding</keyword>
<keyword id="KW-0540">Nuclease</keyword>
<keyword id="KW-1185">Reference proteome</keyword>
<keyword id="KW-0819">tRNA processing</keyword>
<evidence type="ECO:0000255" key="1">
    <source>
        <dbReference type="HAMAP-Rule" id="MF_00157"/>
    </source>
</evidence>
<organism>
    <name type="scientific">Hahella chejuensis (strain KCTC 2396)</name>
    <dbReference type="NCBI Taxonomy" id="349521"/>
    <lineage>
        <taxon>Bacteria</taxon>
        <taxon>Pseudomonadati</taxon>
        <taxon>Pseudomonadota</taxon>
        <taxon>Gammaproteobacteria</taxon>
        <taxon>Oceanospirillales</taxon>
        <taxon>Hahellaceae</taxon>
        <taxon>Hahella</taxon>
    </lineage>
</organism>
<comment type="function">
    <text evidence="1">Trims short 3' overhangs of a variety of RNA species, leaving a one or two nucleotide 3' overhang. Responsible for the end-turnover of tRNA: specifically removes the terminal AMP residue from uncharged tRNA (tRNA-C-C-A). Also appears to be involved in tRNA biosynthesis.</text>
</comment>
<comment type="cofactor">
    <cofactor evidence="1">
        <name>Mg(2+)</name>
        <dbReference type="ChEBI" id="CHEBI:18420"/>
    </cofactor>
    <text evidence="1">Binds two Mg(2+) per subunit. The active form of the enzyme binds two Mg(2+) ions in its active site. The first Mg(2+) forms only one salt bridge with the protein.</text>
</comment>
<comment type="subunit">
    <text evidence="1">Homodimer.</text>
</comment>
<comment type="similarity">
    <text evidence="1">Belongs to the RNase T family.</text>
</comment>
<accession>Q2SCE2</accession>
<name>RNT_HAHCH</name>
<protein>
    <recommendedName>
        <fullName evidence="1">Ribonuclease T</fullName>
        <ecNumber evidence="1">3.1.13.-</ecNumber>
    </recommendedName>
    <alternativeName>
        <fullName evidence="1">Exoribonuclease T</fullName>
        <shortName evidence="1">RNase T</shortName>
    </alternativeName>
</protein>
<proteinExistence type="inferred from homology"/>
<dbReference type="EC" id="3.1.13.-" evidence="1"/>
<dbReference type="EMBL" id="CP000155">
    <property type="protein sequence ID" value="ABC31682.1"/>
    <property type="molecule type" value="Genomic_DNA"/>
</dbReference>
<dbReference type="RefSeq" id="WP_011398747.1">
    <property type="nucleotide sequence ID" value="NC_007645.1"/>
</dbReference>
<dbReference type="SMR" id="Q2SCE2"/>
<dbReference type="STRING" id="349521.HCH_04993"/>
<dbReference type="KEGG" id="hch:HCH_04993"/>
<dbReference type="eggNOG" id="COG0847">
    <property type="taxonomic scope" value="Bacteria"/>
</dbReference>
<dbReference type="HOGENOM" id="CLU_082724_0_0_6"/>
<dbReference type="OrthoDB" id="9778264at2"/>
<dbReference type="Proteomes" id="UP000000238">
    <property type="component" value="Chromosome"/>
</dbReference>
<dbReference type="GO" id="GO:0005829">
    <property type="term" value="C:cytosol"/>
    <property type="evidence" value="ECO:0007669"/>
    <property type="project" value="TreeGrafter"/>
</dbReference>
<dbReference type="GO" id="GO:0008408">
    <property type="term" value="F:3'-5' exonuclease activity"/>
    <property type="evidence" value="ECO:0007669"/>
    <property type="project" value="TreeGrafter"/>
</dbReference>
<dbReference type="GO" id="GO:0000287">
    <property type="term" value="F:magnesium ion binding"/>
    <property type="evidence" value="ECO:0007669"/>
    <property type="project" value="UniProtKB-UniRule"/>
</dbReference>
<dbReference type="GO" id="GO:0003676">
    <property type="term" value="F:nucleic acid binding"/>
    <property type="evidence" value="ECO:0007669"/>
    <property type="project" value="InterPro"/>
</dbReference>
<dbReference type="GO" id="GO:0016896">
    <property type="term" value="F:RNA exonuclease activity, producing 5'-phosphomonoesters"/>
    <property type="evidence" value="ECO:0007669"/>
    <property type="project" value="UniProtKB-UniRule"/>
</dbReference>
<dbReference type="GO" id="GO:0045004">
    <property type="term" value="P:DNA replication proofreading"/>
    <property type="evidence" value="ECO:0007669"/>
    <property type="project" value="TreeGrafter"/>
</dbReference>
<dbReference type="GO" id="GO:0008033">
    <property type="term" value="P:tRNA processing"/>
    <property type="evidence" value="ECO:0007669"/>
    <property type="project" value="UniProtKB-KW"/>
</dbReference>
<dbReference type="CDD" id="cd06134">
    <property type="entry name" value="RNaseT"/>
    <property type="match status" value="1"/>
</dbReference>
<dbReference type="FunFam" id="3.30.420.10:FF:000009">
    <property type="entry name" value="Ribonuclease T"/>
    <property type="match status" value="1"/>
</dbReference>
<dbReference type="Gene3D" id="3.30.420.10">
    <property type="entry name" value="Ribonuclease H-like superfamily/Ribonuclease H"/>
    <property type="match status" value="1"/>
</dbReference>
<dbReference type="HAMAP" id="MF_00157">
    <property type="entry name" value="RNase_T"/>
    <property type="match status" value="1"/>
</dbReference>
<dbReference type="InterPro" id="IPR013520">
    <property type="entry name" value="Exonuclease_RNaseT/DNA_pol3"/>
</dbReference>
<dbReference type="InterPro" id="IPR005987">
    <property type="entry name" value="RNase_T"/>
</dbReference>
<dbReference type="InterPro" id="IPR012337">
    <property type="entry name" value="RNaseH-like_sf"/>
</dbReference>
<dbReference type="InterPro" id="IPR036397">
    <property type="entry name" value="RNaseH_sf"/>
</dbReference>
<dbReference type="NCBIfam" id="TIGR01298">
    <property type="entry name" value="RNaseT"/>
    <property type="match status" value="1"/>
</dbReference>
<dbReference type="PANTHER" id="PTHR30231">
    <property type="entry name" value="DNA POLYMERASE III SUBUNIT EPSILON"/>
    <property type="match status" value="1"/>
</dbReference>
<dbReference type="PANTHER" id="PTHR30231:SF2">
    <property type="entry name" value="RIBONUCLEASE T"/>
    <property type="match status" value="1"/>
</dbReference>
<dbReference type="Pfam" id="PF00929">
    <property type="entry name" value="RNase_T"/>
    <property type="match status" value="1"/>
</dbReference>
<dbReference type="SMART" id="SM00479">
    <property type="entry name" value="EXOIII"/>
    <property type="match status" value="1"/>
</dbReference>
<dbReference type="SUPFAM" id="SSF53098">
    <property type="entry name" value="Ribonuclease H-like"/>
    <property type="match status" value="1"/>
</dbReference>
<feature type="chain" id="PRO_1000011399" description="Ribonuclease T">
    <location>
        <begin position="1"/>
        <end position="218"/>
    </location>
</feature>
<feature type="domain" description="Exonuclease" evidence="1">
    <location>
        <begin position="22"/>
        <end position="196"/>
    </location>
</feature>
<feature type="active site" description="Proton donor/acceptor" evidence="1">
    <location>
        <position position="183"/>
    </location>
</feature>
<feature type="binding site" evidence="1">
    <location>
        <position position="25"/>
    </location>
    <ligand>
        <name>Mg(2+)</name>
        <dbReference type="ChEBI" id="CHEBI:18420"/>
        <label>1</label>
        <note>catalytic</note>
    </ligand>
</feature>
<feature type="binding site" evidence="1">
    <location>
        <position position="25"/>
    </location>
    <ligand>
        <name>Mg(2+)</name>
        <dbReference type="ChEBI" id="CHEBI:18420"/>
        <label>2</label>
        <note>catalytic</note>
    </ligand>
</feature>
<feature type="binding site" evidence="1">
    <location>
        <position position="27"/>
    </location>
    <ligand>
        <name>Mg(2+)</name>
        <dbReference type="ChEBI" id="CHEBI:18420"/>
        <label>2</label>
        <note>catalytic</note>
    </ligand>
</feature>
<feature type="binding site" evidence="1">
    <location>
        <position position="183"/>
    </location>
    <ligand>
        <name>Mg(2+)</name>
        <dbReference type="ChEBI" id="CHEBI:18420"/>
        <label>2</label>
        <note>catalytic</note>
    </ligand>
</feature>
<feature type="binding site" evidence="1">
    <location>
        <position position="188"/>
    </location>
    <ligand>
        <name>Mg(2+)</name>
        <dbReference type="ChEBI" id="CHEBI:18420"/>
        <label>2</label>
        <note>catalytic</note>
    </ligand>
</feature>
<feature type="site" description="Important for substrate binding and specificity" evidence="1">
    <location>
        <position position="31"/>
    </location>
</feature>
<feature type="site" description="Important for substrate binding and specificity" evidence="1">
    <location>
        <position position="79"/>
    </location>
</feature>
<feature type="site" description="Important for substrate binding and specificity" evidence="1">
    <location>
        <position position="126"/>
    </location>
</feature>
<feature type="site" description="Important for substrate binding and specificity" evidence="1">
    <location>
        <position position="148"/>
    </location>
</feature>